<evidence type="ECO:0000250" key="1">
    <source>
        <dbReference type="UniProtKB" id="P37093"/>
    </source>
</evidence>
<evidence type="ECO:0000255" key="2"/>
<evidence type="ECO:0000269" key="3">
    <source>
    </source>
</evidence>
<evidence type="ECO:0000269" key="4">
    <source>
    </source>
</evidence>
<evidence type="ECO:0000303" key="5">
    <source>
    </source>
</evidence>
<evidence type="ECO:0000303" key="6">
    <source>
    </source>
</evidence>
<evidence type="ECO:0000305" key="7"/>
<protein>
    <recommendedName>
        <fullName evidence="6">Type II secretion system protein HxcR</fullName>
        <ecNumber evidence="1">7.4.2.8</ecNumber>
    </recommendedName>
</protein>
<proteinExistence type="evidence at transcript level"/>
<gene>
    <name evidence="5" type="primary">hxcR</name>
    <name type="ordered locus">PA0686</name>
</gene>
<accession>Q9I5N9</accession>
<reference key="1">
    <citation type="journal article" date="2000" name="Nature">
        <title>Complete genome sequence of Pseudomonas aeruginosa PAO1, an opportunistic pathogen.</title>
        <authorList>
            <person name="Stover C.K."/>
            <person name="Pham X.-Q.T."/>
            <person name="Erwin A.L."/>
            <person name="Mizoguchi S.D."/>
            <person name="Warrener P."/>
            <person name="Hickey M.J."/>
            <person name="Brinkman F.S.L."/>
            <person name="Hufnagle W.O."/>
            <person name="Kowalik D.J."/>
            <person name="Lagrou M."/>
            <person name="Garber R.L."/>
            <person name="Goltry L."/>
            <person name="Tolentino E."/>
            <person name="Westbrock-Wadman S."/>
            <person name="Yuan Y."/>
            <person name="Brody L.L."/>
            <person name="Coulter S.N."/>
            <person name="Folger K.R."/>
            <person name="Kas A."/>
            <person name="Larbig K."/>
            <person name="Lim R.M."/>
            <person name="Smith K.A."/>
            <person name="Spencer D.H."/>
            <person name="Wong G.K.-S."/>
            <person name="Wu Z."/>
            <person name="Paulsen I.T."/>
            <person name="Reizer J."/>
            <person name="Saier M.H. Jr."/>
            <person name="Hancock R.E.W."/>
            <person name="Lory S."/>
            <person name="Olson M.V."/>
        </authorList>
    </citation>
    <scope>NUCLEOTIDE SEQUENCE [LARGE SCALE GENOMIC DNA]</scope>
    <source>
        <strain>ATCC 15692 / DSM 22644 / CIP 104116 / JCM 14847 / LMG 12228 / 1C / PRS 101 / PAO1</strain>
    </source>
</reference>
<reference key="2">
    <citation type="journal article" date="2002" name="Mol. Microbiol.">
        <title>A novel type II secretion system in Pseudomonas aeruginosa.</title>
        <authorList>
            <person name="Ball G."/>
            <person name="Durand E."/>
            <person name="Lazdunski A."/>
            <person name="Filloux A."/>
        </authorList>
    </citation>
    <scope>FUNCTION</scope>
    <scope>INDUCTION</scope>
    <scope>DISRUPTION PHENOTYPE</scope>
    <source>
        <strain>ATCC 15692 / DSM 22644 / CIP 104116 / JCM 14847 / LMG 12228 / 1C / PRS 101 / PAO1</strain>
    </source>
</reference>
<reference key="3">
    <citation type="journal article" date="2008" name="PLoS Pathog.">
        <title>Structure-function aspects of PstS in multi-drug-resistant Pseudomonas aeruginosa.</title>
        <authorList>
            <person name="Zaborina O."/>
            <person name="Holbrook C."/>
            <person name="Chen Y."/>
            <person name="Long J."/>
            <person name="Zaborin A."/>
            <person name="Morozova I."/>
            <person name="Fernandez H."/>
            <person name="Wang Y."/>
            <person name="Turner J.R."/>
            <person name="Alverdy J.C."/>
        </authorList>
    </citation>
    <scope>FUNCTION</scope>
    <scope>INDUCTION</scope>
    <scope>DISRUPTION PHENOTYPE</scope>
    <source>
        <strain>ATCC 15692 / DSM 22644 / CIP 104116 / JCM 14847 / LMG 12228 / 1C / PRS 101 / PAO1</strain>
    </source>
</reference>
<dbReference type="EC" id="7.4.2.8" evidence="1"/>
<dbReference type="EMBL" id="AE004091">
    <property type="protein sequence ID" value="AAG04075.1"/>
    <property type="molecule type" value="Genomic_DNA"/>
</dbReference>
<dbReference type="PIR" id="D83561">
    <property type="entry name" value="D83561"/>
</dbReference>
<dbReference type="RefSeq" id="NP_249377.1">
    <property type="nucleotide sequence ID" value="NC_002516.2"/>
</dbReference>
<dbReference type="SMR" id="Q9I5N9"/>
<dbReference type="STRING" id="208964.PA0686"/>
<dbReference type="PaxDb" id="208964-PA0686"/>
<dbReference type="GeneID" id="880808"/>
<dbReference type="KEGG" id="pae:PA0686"/>
<dbReference type="PATRIC" id="fig|208964.12.peg.718"/>
<dbReference type="PseudoCAP" id="PA0686"/>
<dbReference type="HOGENOM" id="CLU_013446_2_0_6"/>
<dbReference type="InParanoid" id="Q9I5N9"/>
<dbReference type="OrthoDB" id="9804785at2"/>
<dbReference type="PhylomeDB" id="Q9I5N9"/>
<dbReference type="BioCyc" id="PAER208964:G1FZ6-696-MONOMER"/>
<dbReference type="Proteomes" id="UP000002438">
    <property type="component" value="Chromosome"/>
</dbReference>
<dbReference type="GO" id="GO:0005737">
    <property type="term" value="C:cytoplasm"/>
    <property type="evidence" value="ECO:0007669"/>
    <property type="project" value="UniProtKB-SubCell"/>
</dbReference>
<dbReference type="GO" id="GO:0005886">
    <property type="term" value="C:plasma membrane"/>
    <property type="evidence" value="ECO:0000318"/>
    <property type="project" value="GO_Central"/>
</dbReference>
<dbReference type="GO" id="GO:0015627">
    <property type="term" value="C:type II protein secretion system complex"/>
    <property type="evidence" value="ECO:0000315"/>
    <property type="project" value="PseudoCAP"/>
</dbReference>
<dbReference type="GO" id="GO:0005524">
    <property type="term" value="F:ATP binding"/>
    <property type="evidence" value="ECO:0007669"/>
    <property type="project" value="UniProtKB-KW"/>
</dbReference>
<dbReference type="GO" id="GO:0016887">
    <property type="term" value="F:ATP hydrolysis activity"/>
    <property type="evidence" value="ECO:0000318"/>
    <property type="project" value="GO_Central"/>
</dbReference>
<dbReference type="GO" id="GO:0008564">
    <property type="term" value="F:protein-exporting ATPase activity"/>
    <property type="evidence" value="ECO:0007669"/>
    <property type="project" value="UniProtKB-EC"/>
</dbReference>
<dbReference type="GO" id="GO:0015628">
    <property type="term" value="P:protein secretion by the type II secretion system"/>
    <property type="evidence" value="ECO:0007669"/>
    <property type="project" value="InterPro"/>
</dbReference>
<dbReference type="CDD" id="cd01129">
    <property type="entry name" value="PulE-GspE-like"/>
    <property type="match status" value="1"/>
</dbReference>
<dbReference type="FunFam" id="3.30.450.90:FF:000001">
    <property type="entry name" value="Type II secretion system ATPase GspE"/>
    <property type="match status" value="1"/>
</dbReference>
<dbReference type="FunFam" id="3.40.50.300:FF:000398">
    <property type="entry name" value="Type IV pilus assembly ATPase PilB"/>
    <property type="match status" value="1"/>
</dbReference>
<dbReference type="Gene3D" id="3.30.450.90">
    <property type="match status" value="1"/>
</dbReference>
<dbReference type="Gene3D" id="3.40.50.300">
    <property type="entry name" value="P-loop containing nucleotide triphosphate hydrolases"/>
    <property type="match status" value="1"/>
</dbReference>
<dbReference type="Gene3D" id="3.30.300.160">
    <property type="entry name" value="Type II secretion system, protein E, N-terminal domain"/>
    <property type="match status" value="1"/>
</dbReference>
<dbReference type="InterPro" id="IPR003593">
    <property type="entry name" value="AAA+_ATPase"/>
</dbReference>
<dbReference type="InterPro" id="IPR054757">
    <property type="entry name" value="GSPE_N1E"/>
</dbReference>
<dbReference type="InterPro" id="IPR027417">
    <property type="entry name" value="P-loop_NTPase"/>
</dbReference>
<dbReference type="InterPro" id="IPR001482">
    <property type="entry name" value="T2SS/T4SS_dom"/>
</dbReference>
<dbReference type="InterPro" id="IPR037257">
    <property type="entry name" value="T2SS_E_N_sf"/>
</dbReference>
<dbReference type="InterPro" id="IPR013369">
    <property type="entry name" value="T2SS_GspE"/>
</dbReference>
<dbReference type="NCBIfam" id="TIGR02533">
    <property type="entry name" value="type_II_gspE"/>
    <property type="match status" value="1"/>
</dbReference>
<dbReference type="PANTHER" id="PTHR30258:SF2">
    <property type="entry name" value="COMG OPERON PROTEIN 1"/>
    <property type="match status" value="1"/>
</dbReference>
<dbReference type="PANTHER" id="PTHR30258">
    <property type="entry name" value="TYPE II SECRETION SYSTEM PROTEIN GSPE-RELATED"/>
    <property type="match status" value="1"/>
</dbReference>
<dbReference type="Pfam" id="PF22341">
    <property type="entry name" value="GSPE_N1E"/>
    <property type="match status" value="1"/>
</dbReference>
<dbReference type="Pfam" id="PF00437">
    <property type="entry name" value="T2SSE"/>
    <property type="match status" value="1"/>
</dbReference>
<dbReference type="SMART" id="SM00382">
    <property type="entry name" value="AAA"/>
    <property type="match status" value="1"/>
</dbReference>
<dbReference type="SUPFAM" id="SSF160246">
    <property type="entry name" value="EspE N-terminal domain-like"/>
    <property type="match status" value="1"/>
</dbReference>
<dbReference type="SUPFAM" id="SSF52540">
    <property type="entry name" value="P-loop containing nucleoside triphosphate hydrolases"/>
    <property type="match status" value="1"/>
</dbReference>
<dbReference type="PROSITE" id="PS00662">
    <property type="entry name" value="T2SP_E"/>
    <property type="match status" value="1"/>
</dbReference>
<keyword id="KW-0067">ATP-binding</keyword>
<keyword id="KW-0963">Cytoplasm</keyword>
<keyword id="KW-0547">Nucleotide-binding</keyword>
<keyword id="KW-0653">Protein transport</keyword>
<keyword id="KW-1185">Reference proteome</keyword>
<keyword id="KW-1278">Translocase</keyword>
<keyword id="KW-0813">Transport</keyword>
<organism>
    <name type="scientific">Pseudomonas aeruginosa (strain ATCC 15692 / DSM 22644 / CIP 104116 / JCM 14847 / LMG 12228 / 1C / PRS 101 / PAO1)</name>
    <dbReference type="NCBI Taxonomy" id="208964"/>
    <lineage>
        <taxon>Bacteria</taxon>
        <taxon>Pseudomonadati</taxon>
        <taxon>Pseudomonadota</taxon>
        <taxon>Gammaproteobacteria</taxon>
        <taxon>Pseudomonadales</taxon>
        <taxon>Pseudomonadaceae</taxon>
        <taxon>Pseudomonas</taxon>
    </lineage>
</organism>
<sequence length="469" mass="50978">MSLLPYAWAKAQRALLRPGEHGATLLVSPRTPGWAISEVRQRHAPASLESVRDDELDTLLASAYSDTGSAAAVVGAAESEVDLDRLMDDIPEVTDLLDTQDGAPVIRMINALLTQAARDEASDIHIEPFETHSVVRYRVDGALRDVVAPRKALHAALVSRIKIMAQLDIAEKRLPQDGRIALRVAGRPIDIRVSTVPTGHGERVVMRLLDKQAGRLRLETLGMAPGVLAPLDNLIRQPHGIVLVTGPTGSGKTTTLYAALARLDASTSNILTVEDPVEYDLPGISQIQVNARIDMTFAVALRAILRQDPDIIMIGEIRDLETAQIAVQASLTGHLVLATLHTNDAVSAVTRLVDMGVEPFLLASSMLGVLAQRLVRRLCTHCRVEEDGGWRAVGCPACNQTGYSGRTGIHELFVIDDEIRRLVHQGRAEQDLREAARAAGMRSMREDGERWIASGSTTLEEILRVTRDA</sequence>
<name>HXCR_PSEAE</name>
<comment type="function">
    <text evidence="1 3 4">ATPase component of the type II secretion system required for the energy-dependent secretion of extracellular factors from the periplasm (By similarity). Acts as a molecular motor to provide the energy that is required for the export of proteins (By similarity). The Hxc system is involved in the secretion of low-molecular-weight alkaline phosphatase L-AP (LapA) (PubMed:11985723). Is probably also involved in the secretion of the phosphate-binding protein PstS (PubMed:18282104).</text>
</comment>
<comment type="catalytic activity">
    <reaction evidence="1">
        <text>ATP + H2O + cellular proteinSide 1 = ADP + phosphate + cellular proteinSide 2.</text>
        <dbReference type="EC" id="7.4.2.8"/>
    </reaction>
</comment>
<comment type="subcellular location">
    <subcellularLocation>
        <location evidence="7">Cytoplasm</location>
    </subcellularLocation>
</comment>
<comment type="induction">
    <text evidence="3 4">Induced by phosphate limitation.</text>
</comment>
<comment type="disruption phenotype">
    <text evidence="3 4">Mutant cannot secrete the low-molecular-weight alkaline phosphatase LapA (PubMed:11985723). Deletion mutant shows decreased ability to express outer surface PstS, but not intracellular PstS (PubMed:18282104).</text>
</comment>
<comment type="similarity">
    <text evidence="7">Belongs to the GSP E family.</text>
</comment>
<feature type="chain" id="PRO_0000431614" description="Type II secretion system protein HxcR">
    <location>
        <begin position="1"/>
        <end position="469"/>
    </location>
</feature>
<feature type="binding site" evidence="2">
    <location>
        <begin position="246"/>
        <end position="253"/>
    </location>
    <ligand>
        <name>ATP</name>
        <dbReference type="ChEBI" id="CHEBI:30616"/>
    </ligand>
</feature>